<keyword id="KW-1003">Cell membrane</keyword>
<keyword id="KW-0407">Ion channel</keyword>
<keyword id="KW-0406">Ion transport</keyword>
<keyword id="KW-0472">Membrane</keyword>
<keyword id="KW-0479">Metal-binding</keyword>
<keyword id="KW-1185">Reference proteome</keyword>
<keyword id="KW-0915">Sodium</keyword>
<keyword id="KW-0812">Transmembrane</keyword>
<keyword id="KW-1133">Transmembrane helix</keyword>
<keyword id="KW-0813">Transport</keyword>
<name>FLUC_THEGJ</name>
<protein>
    <recommendedName>
        <fullName evidence="1">Fluoride-specific ion channel FluC</fullName>
    </recommendedName>
</protein>
<accession>C5A7G3</accession>
<comment type="function">
    <text evidence="1">Fluoride-specific ion channel. Important for reducing fluoride concentration in the cell, thus reducing its toxicity.</text>
</comment>
<comment type="catalytic activity">
    <reaction evidence="1">
        <text>fluoride(in) = fluoride(out)</text>
        <dbReference type="Rhea" id="RHEA:76159"/>
        <dbReference type="ChEBI" id="CHEBI:17051"/>
    </reaction>
    <physiologicalReaction direction="left-to-right" evidence="1">
        <dbReference type="Rhea" id="RHEA:76160"/>
    </physiologicalReaction>
</comment>
<comment type="activity regulation">
    <text evidence="1">Na(+) is not transported, but it plays an essential structural role and its presence is essential for fluoride channel function.</text>
</comment>
<comment type="subcellular location">
    <subcellularLocation>
        <location evidence="1">Cell membrane</location>
        <topology evidence="1">Multi-pass membrane protein</topology>
    </subcellularLocation>
</comment>
<comment type="similarity">
    <text evidence="1">Belongs to the fluoride channel Fluc/FEX (TC 1.A.43) family.</text>
</comment>
<evidence type="ECO:0000255" key="1">
    <source>
        <dbReference type="HAMAP-Rule" id="MF_00454"/>
    </source>
</evidence>
<sequence>MNAKMALAVAAGGALGALFRFYLSGLLPVYRDFPVGTLMVNGLASFILGYLYGLLFWGFDVPSDWRAFLGTGFCGGLSTFSTFSYETFSLLREREYIMAGLNVAANVFVTISLVFIGFLLARR</sequence>
<dbReference type="EMBL" id="CP001398">
    <property type="protein sequence ID" value="ACS34175.1"/>
    <property type="molecule type" value="Genomic_DNA"/>
</dbReference>
<dbReference type="RefSeq" id="WP_015859286.1">
    <property type="nucleotide sequence ID" value="NC_012804.1"/>
</dbReference>
<dbReference type="SMR" id="C5A7G3"/>
<dbReference type="STRING" id="593117.TGAM_1673"/>
<dbReference type="PaxDb" id="593117-TGAM_1673"/>
<dbReference type="GeneID" id="7987583"/>
<dbReference type="KEGG" id="tga:TGAM_1673"/>
<dbReference type="PATRIC" id="fig|593117.10.peg.1679"/>
<dbReference type="eggNOG" id="arCOG04701">
    <property type="taxonomic scope" value="Archaea"/>
</dbReference>
<dbReference type="HOGENOM" id="CLU_114342_3_0_2"/>
<dbReference type="OrthoDB" id="253428at2157"/>
<dbReference type="Proteomes" id="UP000001488">
    <property type="component" value="Chromosome"/>
</dbReference>
<dbReference type="GO" id="GO:0005886">
    <property type="term" value="C:plasma membrane"/>
    <property type="evidence" value="ECO:0007669"/>
    <property type="project" value="UniProtKB-SubCell"/>
</dbReference>
<dbReference type="GO" id="GO:0062054">
    <property type="term" value="F:fluoride channel activity"/>
    <property type="evidence" value="ECO:0007669"/>
    <property type="project" value="UniProtKB-UniRule"/>
</dbReference>
<dbReference type="GO" id="GO:0046872">
    <property type="term" value="F:metal ion binding"/>
    <property type="evidence" value="ECO:0007669"/>
    <property type="project" value="UniProtKB-KW"/>
</dbReference>
<dbReference type="GO" id="GO:0140114">
    <property type="term" value="P:cellular detoxification of fluoride"/>
    <property type="evidence" value="ECO:0007669"/>
    <property type="project" value="UniProtKB-UniRule"/>
</dbReference>
<dbReference type="HAMAP" id="MF_00454">
    <property type="entry name" value="FluC"/>
    <property type="match status" value="1"/>
</dbReference>
<dbReference type="InterPro" id="IPR003691">
    <property type="entry name" value="FluC"/>
</dbReference>
<dbReference type="NCBIfam" id="TIGR00494">
    <property type="entry name" value="crcB"/>
    <property type="match status" value="1"/>
</dbReference>
<dbReference type="PANTHER" id="PTHR28259">
    <property type="entry name" value="FLUORIDE EXPORT PROTEIN 1-RELATED"/>
    <property type="match status" value="1"/>
</dbReference>
<dbReference type="PANTHER" id="PTHR28259:SF1">
    <property type="entry name" value="FLUORIDE EXPORT PROTEIN 1-RELATED"/>
    <property type="match status" value="1"/>
</dbReference>
<dbReference type="Pfam" id="PF02537">
    <property type="entry name" value="CRCB"/>
    <property type="match status" value="1"/>
</dbReference>
<gene>
    <name evidence="1" type="primary">fluC</name>
    <name evidence="1" type="synonym">crcB</name>
    <name type="ordered locus">TGAM_1673</name>
</gene>
<organism>
    <name type="scientific">Thermococcus gammatolerans (strain DSM 15229 / JCM 11827 / EJ3)</name>
    <dbReference type="NCBI Taxonomy" id="593117"/>
    <lineage>
        <taxon>Archaea</taxon>
        <taxon>Methanobacteriati</taxon>
        <taxon>Methanobacteriota</taxon>
        <taxon>Thermococci</taxon>
        <taxon>Thermococcales</taxon>
        <taxon>Thermococcaceae</taxon>
        <taxon>Thermococcus</taxon>
    </lineage>
</organism>
<reference key="1">
    <citation type="journal article" date="2007" name="Genome Biol.">
        <title>Genome analysis and genome-wide proteomics of Thermococcus gammatolerans, the most radioresistant organism known amongst the Archaea.</title>
        <authorList>
            <person name="Zivanovic Y."/>
            <person name="Armengaud J."/>
            <person name="Lagorce A."/>
            <person name="Leplat C."/>
            <person name="Guerin P."/>
            <person name="Dutertre M."/>
            <person name="Anthouard V."/>
            <person name="Forterre P."/>
            <person name="Wincker P."/>
            <person name="Confalonieri F."/>
        </authorList>
    </citation>
    <scope>NUCLEOTIDE SEQUENCE [LARGE SCALE GENOMIC DNA]</scope>
    <source>
        <strain>DSM 15229 / JCM 11827 / EJ3</strain>
    </source>
</reference>
<proteinExistence type="inferred from homology"/>
<feature type="chain" id="PRO_1000206262" description="Fluoride-specific ion channel FluC">
    <location>
        <begin position="1"/>
        <end position="123"/>
    </location>
</feature>
<feature type="transmembrane region" description="Helical" evidence="1">
    <location>
        <begin position="7"/>
        <end position="27"/>
    </location>
</feature>
<feature type="transmembrane region" description="Helical" evidence="1">
    <location>
        <begin position="39"/>
        <end position="59"/>
    </location>
</feature>
<feature type="transmembrane region" description="Helical" evidence="1">
    <location>
        <begin position="68"/>
        <end position="88"/>
    </location>
</feature>
<feature type="transmembrane region" description="Helical" evidence="1">
    <location>
        <begin position="101"/>
        <end position="121"/>
    </location>
</feature>
<feature type="binding site" evidence="1">
    <location>
        <position position="75"/>
    </location>
    <ligand>
        <name>Na(+)</name>
        <dbReference type="ChEBI" id="CHEBI:29101"/>
        <note>structural</note>
    </ligand>
</feature>
<feature type="binding site" evidence="1">
    <location>
        <position position="78"/>
    </location>
    <ligand>
        <name>Na(+)</name>
        <dbReference type="ChEBI" id="CHEBI:29101"/>
        <note>structural</note>
    </ligand>
</feature>